<keyword id="KW-0972">Capsule biogenesis/degradation</keyword>
<keyword id="KW-0270">Exopolysaccharide synthesis</keyword>
<keyword id="KW-0378">Hydrolase</keyword>
<keyword id="KW-0464">Manganese</keyword>
<keyword id="KW-0904">Protein phosphatase</keyword>
<feature type="chain" id="PRO_0000057892" description="Tyrosine-protein phosphatase CpsB">
    <location>
        <begin position="1"/>
        <end position="243"/>
    </location>
</feature>
<feature type="sequence variant" description="In strain: NCTC 11906.">
    <original>A</original>
    <variation>V</variation>
    <location>
        <position position="226"/>
    </location>
</feature>
<feature type="mutagenesis site" description="Loss of activity; when associated with Q-201." evidence="1">
    <original>D</original>
    <variation>N</variation>
    <location>
        <position position="199"/>
    </location>
</feature>
<feature type="mutagenesis site" description="Loss of activity; when associated with N-199." evidence="1">
    <original>H</original>
    <variation>Q</variation>
    <location>
        <position position="201"/>
    </location>
</feature>
<comment type="function">
    <text>Dephosphorylates CpsD. Involved in the regulation of capsular polysaccharide biosynthesis.</text>
</comment>
<comment type="catalytic activity">
    <reaction>
        <text>O-phospho-L-tyrosyl-[protein] + H2O = L-tyrosyl-[protein] + phosphate</text>
        <dbReference type="Rhea" id="RHEA:10684"/>
        <dbReference type="Rhea" id="RHEA-COMP:10136"/>
        <dbReference type="Rhea" id="RHEA-COMP:20101"/>
        <dbReference type="ChEBI" id="CHEBI:15377"/>
        <dbReference type="ChEBI" id="CHEBI:43474"/>
        <dbReference type="ChEBI" id="CHEBI:46858"/>
        <dbReference type="ChEBI" id="CHEBI:61978"/>
        <dbReference type="EC" id="3.1.3.48"/>
    </reaction>
</comment>
<comment type="cofactor">
    <cofactor>
        <name>Mn(2+)</name>
        <dbReference type="ChEBI" id="CHEBI:29035"/>
    </cofactor>
</comment>
<comment type="pathway">
    <text>Capsule biogenesis; capsule polysaccharide biosynthesis.</text>
</comment>
<comment type="similarity">
    <text evidence="2">Belongs to the metallo-dependent hydrolases superfamily. CpsB/CapC family.</text>
</comment>
<reference key="1">
    <citation type="journal article" date="1994" name="Infect. Immun.">
        <title>Nucleotide sequence analysis of genes essential for capsular polysaccharide biosynthesis in Streptococcus pneumoniae type 19F.</title>
        <authorList>
            <person name="Guidolin A."/>
            <person name="Morona J.K."/>
            <person name="Morona R."/>
            <person name="Hansman D."/>
            <person name="Paton J.C."/>
        </authorList>
    </citation>
    <scope>NUCLEOTIDE SEQUENCE [GENOMIC DNA]</scope>
    <source>
        <strain>Serotype 19F</strain>
    </source>
</reference>
<reference key="2">
    <citation type="journal article" date="1997" name="Mol. Microbiol.">
        <title>Molecular organization of the genes required for the synthesis of type 1 capsular polysaccharide of Streptococcus pneumoniae: formation of binary encapsulated pneumococci and identification of cryptic dTDP-rhamnose biosynthesis genes.</title>
        <authorList>
            <person name="Munoz R."/>
            <person name="Mollerach M.E."/>
            <person name="Lopez R."/>
            <person name="Garcia E."/>
        </authorList>
    </citation>
    <scope>NUCLEOTIDE SEQUENCE [GENOMIC DNA]</scope>
</reference>
<reference key="3">
    <citation type="journal article" date="1998" name="Mol. Microbiol.">
        <title>Recombinational exchanges at the capsular polysaccharide biosynthetic locus lead to frequent serotype changes among natural isolates of Streptococcus pneumoniae.</title>
        <authorList>
            <person name="Coffey T.J."/>
            <person name="Enright M.C."/>
            <person name="Daniels M."/>
            <person name="Morona J.K."/>
            <person name="Morona R."/>
            <person name="Hryniewicz W."/>
            <person name="Paton J.C."/>
            <person name="Spratt B.G."/>
        </authorList>
    </citation>
    <scope>NUCLEOTIDE SEQUENCE [GENOMIC DNA]</scope>
    <source>
        <strain>NCTC 11906 / Serotype 19F</strain>
        <strain>PO-329 / Serotype 19F</strain>
        <strain>SP-496 / Serotype 19F</strain>
        <strain>SP-GA71 / Serotype 19F</strain>
        <strain>SP-VA92 / Serotype 19F</strain>
        <strain>SP-VA96 / Serotype 19F</strain>
    </source>
</reference>
<reference key="4">
    <citation type="submission" date="1998-11" db="EMBL/GenBank/DDBJ databases">
        <title>Analysis of capsule loci from various Streptococcus pneumoniae serotypes using long-range PCR identifies two classes of cpsC.</title>
        <authorList>
            <person name="Morona J.K."/>
            <person name="Morona R."/>
            <person name="Paton J.C."/>
        </authorList>
    </citation>
    <scope>NUCLEOTIDE SEQUENCE [GENOMIC DNA] OF 220-243</scope>
    <source>
        <strain>Serotype 19B</strain>
    </source>
</reference>
<reference key="5">
    <citation type="journal article" date="2002" name="J. Bacteriol.">
        <title>Streptococcus pneumoniae capsule biosynthesis protein CpsB is a novel manganese-dependent phosphotyrosine-protein phosphatase.</title>
        <authorList>
            <person name="Morona J.K."/>
            <person name="Morona R."/>
            <person name="Miller D.C."/>
            <person name="Paton J.C."/>
        </authorList>
    </citation>
    <scope>CHARACTERIZATION</scope>
    <scope>MUTAGENESIS OF ASP-199 AND HIS-201</scope>
    <source>
        <strain>Rx1-19F / Serotype 19F</strain>
    </source>
</reference>
<evidence type="ECO:0000269" key="1">
    <source>
    </source>
</evidence>
<evidence type="ECO:0000305" key="2"/>
<proteinExistence type="evidence at protein level"/>
<protein>
    <recommendedName>
        <fullName>Tyrosine-protein phosphatase CpsB</fullName>
        <ecNumber>3.1.3.48</ecNumber>
    </recommendedName>
</protein>
<accession>Q54518</accession>
<accession>O08049</accession>
<accession>O08278</accession>
<accession>O52232</accession>
<sequence>MIDIHSHIVFDVDDGPKSREESKALLAESYRQGVRTIVSTSHRRKGMFETPEEKIAENFLQVREIAKEVADDLVIAYGAEIYYTLDALEKLEKKEIPTLNDSRYALIEFSMHTSYRQIHTGLSNILMLGITPVIAHIERYDALENNEKRVRELIDMGCYTQINSYHVSKPKFFGEKYKFMKKRARYFLERDLVHVVASDMHNLDSRPPYMQQAYDIIAKKYGAKKAKELFVDNPRKIIMDQLI</sequence>
<dbReference type="EC" id="3.1.3.48"/>
<dbReference type="EMBL" id="U09239">
    <property type="protein sequence ID" value="AAC44959.1"/>
    <property type="molecule type" value="Genomic_DNA"/>
</dbReference>
<dbReference type="EMBL" id="Z83335">
    <property type="protein sequence ID" value="CAB05935.1"/>
    <property type="molecule type" value="Genomic_DNA"/>
</dbReference>
<dbReference type="EMBL" id="AF030367">
    <property type="protein sequence ID" value="AAC38717.1"/>
    <property type="molecule type" value="Genomic_DNA"/>
</dbReference>
<dbReference type="EMBL" id="AF030368">
    <property type="protein sequence ID" value="AAC38722.1"/>
    <property type="molecule type" value="Genomic_DNA"/>
</dbReference>
<dbReference type="EMBL" id="AF030369">
    <property type="protein sequence ID" value="AAC38727.1"/>
    <property type="molecule type" value="Genomic_DNA"/>
</dbReference>
<dbReference type="EMBL" id="AF030370">
    <property type="protein sequence ID" value="AAC38731.1"/>
    <property type="molecule type" value="Genomic_DNA"/>
</dbReference>
<dbReference type="EMBL" id="AF030371">
    <property type="protein sequence ID" value="AAC38736.1"/>
    <property type="molecule type" value="Genomic_DNA"/>
</dbReference>
<dbReference type="EMBL" id="AF030372">
    <property type="protein sequence ID" value="AAC38741.1"/>
    <property type="molecule type" value="Genomic_DNA"/>
</dbReference>
<dbReference type="EMBL" id="AF106137">
    <property type="protein sequence ID" value="AAD17985.1"/>
    <property type="molecule type" value="Genomic_DNA"/>
</dbReference>
<dbReference type="SMR" id="Q54518"/>
<dbReference type="OMA" id="MHNLGPR"/>
<dbReference type="UniPathway" id="UPA00934"/>
<dbReference type="GO" id="GO:0030145">
    <property type="term" value="F:manganese ion binding"/>
    <property type="evidence" value="ECO:0007669"/>
    <property type="project" value="InterPro"/>
</dbReference>
<dbReference type="GO" id="GO:0004725">
    <property type="term" value="F:protein tyrosine phosphatase activity"/>
    <property type="evidence" value="ECO:0007669"/>
    <property type="project" value="UniProtKB-EC"/>
</dbReference>
<dbReference type="GO" id="GO:0045227">
    <property type="term" value="P:capsule polysaccharide biosynthetic process"/>
    <property type="evidence" value="ECO:0007669"/>
    <property type="project" value="UniProtKB-UniPathway"/>
</dbReference>
<dbReference type="Gene3D" id="3.20.20.140">
    <property type="entry name" value="Metal-dependent hydrolases"/>
    <property type="match status" value="1"/>
</dbReference>
<dbReference type="InterPro" id="IPR048208">
    <property type="entry name" value="Caps_polysacc_synth_CpsB"/>
</dbReference>
<dbReference type="InterPro" id="IPR016667">
    <property type="entry name" value="Caps_polysacc_synth_CpsB/CapC"/>
</dbReference>
<dbReference type="InterPro" id="IPR032466">
    <property type="entry name" value="Metal_Hydrolase"/>
</dbReference>
<dbReference type="NCBIfam" id="NF041488">
    <property type="entry name" value="caps_synth_Cps4B"/>
    <property type="match status" value="1"/>
</dbReference>
<dbReference type="PANTHER" id="PTHR39181">
    <property type="entry name" value="TYROSINE-PROTEIN PHOSPHATASE YWQE"/>
    <property type="match status" value="1"/>
</dbReference>
<dbReference type="PANTHER" id="PTHR39181:SF1">
    <property type="entry name" value="TYROSINE-PROTEIN PHOSPHATASE YWQE"/>
    <property type="match status" value="1"/>
</dbReference>
<dbReference type="Pfam" id="PF19567">
    <property type="entry name" value="CpsB_CapC"/>
    <property type="match status" value="1"/>
</dbReference>
<dbReference type="PIRSF" id="PIRSF016557">
    <property type="entry name" value="Caps_synth_CpsB"/>
    <property type="match status" value="1"/>
</dbReference>
<dbReference type="SUPFAM" id="SSF51556">
    <property type="entry name" value="Metallo-dependent hydrolases"/>
    <property type="match status" value="1"/>
</dbReference>
<name>CPSB_STREE</name>
<gene>
    <name type="primary">cpsB</name>
    <name type="synonym">cap1B</name>
    <name type="synonym">cps19fB</name>
</gene>
<organism>
    <name type="scientific">Streptococcus pneumoniae</name>
    <dbReference type="NCBI Taxonomy" id="1313"/>
    <lineage>
        <taxon>Bacteria</taxon>
        <taxon>Bacillati</taxon>
        <taxon>Bacillota</taxon>
        <taxon>Bacilli</taxon>
        <taxon>Lactobacillales</taxon>
        <taxon>Streptococcaceae</taxon>
        <taxon>Streptococcus</taxon>
    </lineage>
</organism>